<sequence>MRVGVFDSGLGGLTVVQALSRVIKGADIFYVADTKHAPYGEKTPEQILQYSLNITAYFLDEHQIDVLIIACNTATSAAVKTLRERYPELIIIGTEPGIKPALEQTRTKNIGVLATPATLVGEKYQDLVNVLSAKEEVTLYEQACPGLVEQIENGEIESGKTHDMLEGWLHPMRENDVDTIVLGCTHYPLVAHKIEEIMKREMNLIHTGDAIAKRLLALAEEKGYENRGKFSLCIMSTAKIDQEIIKQIIPEYDCFKFISVKTSNF</sequence>
<dbReference type="EC" id="5.1.1.3" evidence="1"/>
<dbReference type="EMBL" id="AP009179">
    <property type="protein sequence ID" value="BAF72873.1"/>
    <property type="molecule type" value="Genomic_DNA"/>
</dbReference>
<dbReference type="RefSeq" id="WP_012083692.1">
    <property type="nucleotide sequence ID" value="NC_009663.1"/>
</dbReference>
<dbReference type="SMR" id="A6QBL4"/>
<dbReference type="STRING" id="387093.SUN_1926"/>
<dbReference type="KEGG" id="sun:SUN_1926"/>
<dbReference type="eggNOG" id="COG0796">
    <property type="taxonomic scope" value="Bacteria"/>
</dbReference>
<dbReference type="HOGENOM" id="CLU_052344_1_0_7"/>
<dbReference type="OrthoDB" id="9801055at2"/>
<dbReference type="UniPathway" id="UPA00219"/>
<dbReference type="Proteomes" id="UP000006378">
    <property type="component" value="Chromosome"/>
</dbReference>
<dbReference type="GO" id="GO:0008881">
    <property type="term" value="F:glutamate racemase activity"/>
    <property type="evidence" value="ECO:0007669"/>
    <property type="project" value="UniProtKB-UniRule"/>
</dbReference>
<dbReference type="GO" id="GO:0071555">
    <property type="term" value="P:cell wall organization"/>
    <property type="evidence" value="ECO:0007669"/>
    <property type="project" value="UniProtKB-KW"/>
</dbReference>
<dbReference type="GO" id="GO:0009252">
    <property type="term" value="P:peptidoglycan biosynthetic process"/>
    <property type="evidence" value="ECO:0007669"/>
    <property type="project" value="UniProtKB-UniRule"/>
</dbReference>
<dbReference type="GO" id="GO:0008360">
    <property type="term" value="P:regulation of cell shape"/>
    <property type="evidence" value="ECO:0007669"/>
    <property type="project" value="UniProtKB-KW"/>
</dbReference>
<dbReference type="FunFam" id="3.40.50.1860:FF:000001">
    <property type="entry name" value="Glutamate racemase"/>
    <property type="match status" value="1"/>
</dbReference>
<dbReference type="Gene3D" id="3.40.50.1860">
    <property type="match status" value="2"/>
</dbReference>
<dbReference type="HAMAP" id="MF_00258">
    <property type="entry name" value="Glu_racemase"/>
    <property type="match status" value="1"/>
</dbReference>
<dbReference type="InterPro" id="IPR015942">
    <property type="entry name" value="Asp/Glu/hydantoin_racemase"/>
</dbReference>
<dbReference type="InterPro" id="IPR001920">
    <property type="entry name" value="Asp/Glu_race"/>
</dbReference>
<dbReference type="InterPro" id="IPR018187">
    <property type="entry name" value="Asp/Glu_racemase_AS_1"/>
</dbReference>
<dbReference type="InterPro" id="IPR033134">
    <property type="entry name" value="Asp/Glu_racemase_AS_2"/>
</dbReference>
<dbReference type="InterPro" id="IPR004391">
    <property type="entry name" value="Glu_race"/>
</dbReference>
<dbReference type="NCBIfam" id="TIGR00067">
    <property type="entry name" value="glut_race"/>
    <property type="match status" value="1"/>
</dbReference>
<dbReference type="PANTHER" id="PTHR21198">
    <property type="entry name" value="GLUTAMATE RACEMASE"/>
    <property type="match status" value="1"/>
</dbReference>
<dbReference type="PANTHER" id="PTHR21198:SF3">
    <property type="entry name" value="GLUTAMATE RACEMASE"/>
    <property type="match status" value="1"/>
</dbReference>
<dbReference type="Pfam" id="PF01177">
    <property type="entry name" value="Asp_Glu_race"/>
    <property type="match status" value="1"/>
</dbReference>
<dbReference type="SUPFAM" id="SSF53681">
    <property type="entry name" value="Aspartate/glutamate racemase"/>
    <property type="match status" value="2"/>
</dbReference>
<dbReference type="PROSITE" id="PS00923">
    <property type="entry name" value="ASP_GLU_RACEMASE_1"/>
    <property type="match status" value="1"/>
</dbReference>
<dbReference type="PROSITE" id="PS00924">
    <property type="entry name" value="ASP_GLU_RACEMASE_2"/>
    <property type="match status" value="1"/>
</dbReference>
<name>MURI_SULNB</name>
<evidence type="ECO:0000255" key="1">
    <source>
        <dbReference type="HAMAP-Rule" id="MF_00258"/>
    </source>
</evidence>
<feature type="chain" id="PRO_1000078580" description="Glutamate racemase">
    <location>
        <begin position="1"/>
        <end position="265"/>
    </location>
</feature>
<feature type="active site" description="Proton donor/acceptor" evidence="1">
    <location>
        <position position="71"/>
    </location>
</feature>
<feature type="active site" description="Proton donor/acceptor" evidence="1">
    <location>
        <position position="184"/>
    </location>
</feature>
<feature type="binding site" evidence="1">
    <location>
        <begin position="7"/>
        <end position="8"/>
    </location>
    <ligand>
        <name>substrate</name>
    </ligand>
</feature>
<feature type="binding site" evidence="1">
    <location>
        <begin position="39"/>
        <end position="40"/>
    </location>
    <ligand>
        <name>substrate</name>
    </ligand>
</feature>
<feature type="binding site" evidence="1">
    <location>
        <begin position="72"/>
        <end position="73"/>
    </location>
    <ligand>
        <name>substrate</name>
    </ligand>
</feature>
<feature type="binding site" evidence="1">
    <location>
        <begin position="185"/>
        <end position="186"/>
    </location>
    <ligand>
        <name>substrate</name>
    </ligand>
</feature>
<protein>
    <recommendedName>
        <fullName evidence="1">Glutamate racemase</fullName>
        <ecNumber evidence="1">5.1.1.3</ecNumber>
    </recommendedName>
</protein>
<accession>A6QBL4</accession>
<gene>
    <name evidence="1" type="primary">murI</name>
    <name type="ordered locus">SUN_1926</name>
</gene>
<organism>
    <name type="scientific">Sulfurovum sp. (strain NBC37-1)</name>
    <dbReference type="NCBI Taxonomy" id="387093"/>
    <lineage>
        <taxon>Bacteria</taxon>
        <taxon>Pseudomonadati</taxon>
        <taxon>Campylobacterota</taxon>
        <taxon>Epsilonproteobacteria</taxon>
        <taxon>Campylobacterales</taxon>
        <taxon>Sulfurovaceae</taxon>
        <taxon>Sulfurovum</taxon>
    </lineage>
</organism>
<reference key="1">
    <citation type="journal article" date="2007" name="Proc. Natl. Acad. Sci. U.S.A.">
        <title>Deep-sea vent epsilon-proteobacterial genomes provide insights into emergence of pathogens.</title>
        <authorList>
            <person name="Nakagawa S."/>
            <person name="Takaki Y."/>
            <person name="Shimamura S."/>
            <person name="Reysenbach A.-L."/>
            <person name="Takai K."/>
            <person name="Horikoshi K."/>
        </authorList>
    </citation>
    <scope>NUCLEOTIDE SEQUENCE [LARGE SCALE GENOMIC DNA]</scope>
    <source>
        <strain>NBC37-1</strain>
    </source>
</reference>
<keyword id="KW-0133">Cell shape</keyword>
<keyword id="KW-0961">Cell wall biogenesis/degradation</keyword>
<keyword id="KW-0413">Isomerase</keyword>
<keyword id="KW-0573">Peptidoglycan synthesis</keyword>
<proteinExistence type="inferred from homology"/>
<comment type="function">
    <text evidence="1">Provides the (R)-glutamate required for cell wall biosynthesis.</text>
</comment>
<comment type="catalytic activity">
    <reaction evidence="1">
        <text>L-glutamate = D-glutamate</text>
        <dbReference type="Rhea" id="RHEA:12813"/>
        <dbReference type="ChEBI" id="CHEBI:29985"/>
        <dbReference type="ChEBI" id="CHEBI:29986"/>
        <dbReference type="EC" id="5.1.1.3"/>
    </reaction>
</comment>
<comment type="pathway">
    <text evidence="1">Cell wall biogenesis; peptidoglycan biosynthesis.</text>
</comment>
<comment type="similarity">
    <text evidence="1">Belongs to the aspartate/glutamate racemases family.</text>
</comment>